<reference key="1">
    <citation type="submission" date="2008-05" db="EMBL/GenBank/DDBJ databases">
        <title>Genome sequence of Helicobacter pylori from the remote Amazon: traces of Asian ancestry of the first Americans.</title>
        <authorList>
            <person name="Kersulyte D."/>
            <person name="Kalia A."/>
            <person name="Gilman R.H."/>
            <person name="Berg D.E."/>
        </authorList>
    </citation>
    <scope>NUCLEOTIDE SEQUENCE [LARGE SCALE GENOMIC DNA]</scope>
    <source>
        <strain>Shi470</strain>
    </source>
</reference>
<feature type="chain" id="PRO_1000096162" description="Elongation factor P">
    <location>
        <begin position="1"/>
        <end position="187"/>
    </location>
</feature>
<gene>
    <name evidence="1" type="primary">efp</name>
    <name type="ordered locus">HPSH_00890</name>
</gene>
<keyword id="KW-0963">Cytoplasm</keyword>
<keyword id="KW-0251">Elongation factor</keyword>
<keyword id="KW-0648">Protein biosynthesis</keyword>
<comment type="function">
    <text evidence="1">Involved in peptide bond synthesis. Stimulates efficient translation and peptide-bond synthesis on native or reconstituted 70S ribosomes in vitro. Probably functions indirectly by altering the affinity of the ribosome for aminoacyl-tRNA, thus increasing their reactivity as acceptors for peptidyl transferase.</text>
</comment>
<comment type="pathway">
    <text evidence="1">Protein biosynthesis; polypeptide chain elongation.</text>
</comment>
<comment type="subcellular location">
    <subcellularLocation>
        <location evidence="1">Cytoplasm</location>
    </subcellularLocation>
</comment>
<comment type="similarity">
    <text evidence="1">Belongs to the elongation factor P family.</text>
</comment>
<organism>
    <name type="scientific">Helicobacter pylori (strain Shi470)</name>
    <dbReference type="NCBI Taxonomy" id="512562"/>
    <lineage>
        <taxon>Bacteria</taxon>
        <taxon>Pseudomonadati</taxon>
        <taxon>Campylobacterota</taxon>
        <taxon>Epsilonproteobacteria</taxon>
        <taxon>Campylobacterales</taxon>
        <taxon>Helicobacteraceae</taxon>
        <taxon>Helicobacter</taxon>
    </lineage>
</organism>
<dbReference type="EMBL" id="CP001072">
    <property type="protein sequence ID" value="ACD47638.1"/>
    <property type="molecule type" value="Genomic_DNA"/>
</dbReference>
<dbReference type="RefSeq" id="WP_000974265.1">
    <property type="nucleotide sequence ID" value="NC_010698.2"/>
</dbReference>
<dbReference type="SMR" id="B2US06"/>
<dbReference type="GeneID" id="93236545"/>
<dbReference type="KEGG" id="hps:HPSH_00890"/>
<dbReference type="HOGENOM" id="CLU_074944_0_1_7"/>
<dbReference type="UniPathway" id="UPA00345"/>
<dbReference type="GO" id="GO:0005737">
    <property type="term" value="C:cytoplasm"/>
    <property type="evidence" value="ECO:0007669"/>
    <property type="project" value="UniProtKB-SubCell"/>
</dbReference>
<dbReference type="GO" id="GO:0003746">
    <property type="term" value="F:translation elongation factor activity"/>
    <property type="evidence" value="ECO:0007669"/>
    <property type="project" value="UniProtKB-UniRule"/>
</dbReference>
<dbReference type="GO" id="GO:0043043">
    <property type="term" value="P:peptide biosynthetic process"/>
    <property type="evidence" value="ECO:0007669"/>
    <property type="project" value="InterPro"/>
</dbReference>
<dbReference type="CDD" id="cd04470">
    <property type="entry name" value="S1_EF-P_repeat_1"/>
    <property type="match status" value="1"/>
</dbReference>
<dbReference type="CDD" id="cd05794">
    <property type="entry name" value="S1_EF-P_repeat_2"/>
    <property type="match status" value="1"/>
</dbReference>
<dbReference type="FunFam" id="2.30.30.30:FF:000003">
    <property type="entry name" value="Elongation factor P"/>
    <property type="match status" value="1"/>
</dbReference>
<dbReference type="FunFam" id="2.40.50.140:FF:000004">
    <property type="entry name" value="Elongation factor P"/>
    <property type="match status" value="1"/>
</dbReference>
<dbReference type="FunFam" id="2.40.50.140:FF:000009">
    <property type="entry name" value="Elongation factor P"/>
    <property type="match status" value="1"/>
</dbReference>
<dbReference type="Gene3D" id="2.30.30.30">
    <property type="match status" value="1"/>
</dbReference>
<dbReference type="Gene3D" id="2.40.50.140">
    <property type="entry name" value="Nucleic acid-binding proteins"/>
    <property type="match status" value="2"/>
</dbReference>
<dbReference type="HAMAP" id="MF_00141">
    <property type="entry name" value="EF_P"/>
    <property type="match status" value="1"/>
</dbReference>
<dbReference type="InterPro" id="IPR015365">
    <property type="entry name" value="Elong-fact-P_C"/>
</dbReference>
<dbReference type="InterPro" id="IPR012340">
    <property type="entry name" value="NA-bd_OB-fold"/>
</dbReference>
<dbReference type="InterPro" id="IPR014722">
    <property type="entry name" value="Rib_uL2_dom2"/>
</dbReference>
<dbReference type="InterPro" id="IPR020599">
    <property type="entry name" value="Transl_elong_fac_P/YeiP"/>
</dbReference>
<dbReference type="InterPro" id="IPR013185">
    <property type="entry name" value="Transl_elong_KOW-like"/>
</dbReference>
<dbReference type="InterPro" id="IPR001059">
    <property type="entry name" value="Transl_elong_P/YeiP_cen"/>
</dbReference>
<dbReference type="InterPro" id="IPR013852">
    <property type="entry name" value="Transl_elong_P/YeiP_CS"/>
</dbReference>
<dbReference type="InterPro" id="IPR011768">
    <property type="entry name" value="Transl_elongation_fac_P"/>
</dbReference>
<dbReference type="InterPro" id="IPR008991">
    <property type="entry name" value="Translation_prot_SH3-like_sf"/>
</dbReference>
<dbReference type="NCBIfam" id="TIGR00038">
    <property type="entry name" value="efp"/>
    <property type="match status" value="1"/>
</dbReference>
<dbReference type="NCBIfam" id="NF001810">
    <property type="entry name" value="PRK00529.1"/>
    <property type="match status" value="1"/>
</dbReference>
<dbReference type="PANTHER" id="PTHR30053">
    <property type="entry name" value="ELONGATION FACTOR P"/>
    <property type="match status" value="1"/>
</dbReference>
<dbReference type="PANTHER" id="PTHR30053:SF12">
    <property type="entry name" value="ELONGATION FACTOR P (EF-P) FAMILY PROTEIN"/>
    <property type="match status" value="1"/>
</dbReference>
<dbReference type="Pfam" id="PF01132">
    <property type="entry name" value="EFP"/>
    <property type="match status" value="1"/>
</dbReference>
<dbReference type="Pfam" id="PF08207">
    <property type="entry name" value="EFP_N"/>
    <property type="match status" value="1"/>
</dbReference>
<dbReference type="Pfam" id="PF09285">
    <property type="entry name" value="Elong-fact-P_C"/>
    <property type="match status" value="1"/>
</dbReference>
<dbReference type="PIRSF" id="PIRSF005901">
    <property type="entry name" value="EF-P"/>
    <property type="match status" value="1"/>
</dbReference>
<dbReference type="SMART" id="SM01185">
    <property type="entry name" value="EFP"/>
    <property type="match status" value="1"/>
</dbReference>
<dbReference type="SMART" id="SM00841">
    <property type="entry name" value="Elong-fact-P_C"/>
    <property type="match status" value="1"/>
</dbReference>
<dbReference type="SUPFAM" id="SSF50249">
    <property type="entry name" value="Nucleic acid-binding proteins"/>
    <property type="match status" value="2"/>
</dbReference>
<dbReference type="SUPFAM" id="SSF50104">
    <property type="entry name" value="Translation proteins SH3-like domain"/>
    <property type="match status" value="1"/>
</dbReference>
<dbReference type="PROSITE" id="PS01275">
    <property type="entry name" value="EFP"/>
    <property type="match status" value="1"/>
</dbReference>
<sequence>MAIGMSELKKGLKIELGGVPYRIVEYQHVKPGKGAAFVRAKIKSFLDGKVIEKTFHAGDKCEEPNLVEKTMQYLYHDGDTYQFMDIESYEQIALNDSQVGEASKWMLDGMQVQVLLHNDKAISVDVPQVVALKIVETAPNFKGDTSSASKKPATLETGAVVQVPFHVLEGEIIKVNTETEEYLEKVK</sequence>
<evidence type="ECO:0000255" key="1">
    <source>
        <dbReference type="HAMAP-Rule" id="MF_00141"/>
    </source>
</evidence>
<protein>
    <recommendedName>
        <fullName evidence="1">Elongation factor P</fullName>
        <shortName evidence="1">EF-P</shortName>
    </recommendedName>
</protein>
<name>EFP_HELPS</name>
<accession>B2US06</accession>
<proteinExistence type="inferred from homology"/>